<sequence>MQINIYSIAKKDAKYQALLEELCMQCKQFGVEIKILNLLPQAVLKAQKISSAKAQQSYTQTFLPYIALPTALNLILHPTGHNYDSQSFAKLIESQHIVQFFIGGAFGFEESFVRLGKSVSLSAMTFNHKIAKLVLCEQIYRALSILHSHPYHK</sequence>
<organism>
    <name type="scientific">Helicobacter hepaticus (strain ATCC 51449 / 3B1)</name>
    <dbReference type="NCBI Taxonomy" id="235279"/>
    <lineage>
        <taxon>Bacteria</taxon>
        <taxon>Pseudomonadati</taxon>
        <taxon>Campylobacterota</taxon>
        <taxon>Epsilonproteobacteria</taxon>
        <taxon>Campylobacterales</taxon>
        <taxon>Helicobacteraceae</taxon>
        <taxon>Helicobacter</taxon>
    </lineage>
</organism>
<name>RLMH_HELHP</name>
<keyword id="KW-0963">Cytoplasm</keyword>
<keyword id="KW-0489">Methyltransferase</keyword>
<keyword id="KW-1185">Reference proteome</keyword>
<keyword id="KW-0698">rRNA processing</keyword>
<keyword id="KW-0949">S-adenosyl-L-methionine</keyword>
<keyword id="KW-0808">Transferase</keyword>
<comment type="function">
    <text evidence="1">Specifically methylates the pseudouridine at position 1915 (m3Psi1915) in 23S rRNA.</text>
</comment>
<comment type="catalytic activity">
    <reaction evidence="1">
        <text>pseudouridine(1915) in 23S rRNA + S-adenosyl-L-methionine = N(3)-methylpseudouridine(1915) in 23S rRNA + S-adenosyl-L-homocysteine + H(+)</text>
        <dbReference type="Rhea" id="RHEA:42752"/>
        <dbReference type="Rhea" id="RHEA-COMP:10221"/>
        <dbReference type="Rhea" id="RHEA-COMP:10222"/>
        <dbReference type="ChEBI" id="CHEBI:15378"/>
        <dbReference type="ChEBI" id="CHEBI:57856"/>
        <dbReference type="ChEBI" id="CHEBI:59789"/>
        <dbReference type="ChEBI" id="CHEBI:65314"/>
        <dbReference type="ChEBI" id="CHEBI:74486"/>
        <dbReference type="EC" id="2.1.1.177"/>
    </reaction>
</comment>
<comment type="subunit">
    <text evidence="1">Homodimer.</text>
</comment>
<comment type="subcellular location">
    <subcellularLocation>
        <location evidence="1">Cytoplasm</location>
    </subcellularLocation>
</comment>
<comment type="similarity">
    <text evidence="1">Belongs to the RNA methyltransferase RlmH family.</text>
</comment>
<comment type="sequence caution" evidence="2">
    <conflict type="erroneous initiation">
        <sequence resource="EMBL-CDS" id="AAP77834"/>
    </conflict>
</comment>
<reference key="1">
    <citation type="journal article" date="2003" name="Proc. Natl. Acad. Sci. U.S.A.">
        <title>The complete genome sequence of the carcinogenic bacterium Helicobacter hepaticus.</title>
        <authorList>
            <person name="Suerbaum S."/>
            <person name="Josenhans C."/>
            <person name="Sterzenbach T."/>
            <person name="Drescher B."/>
            <person name="Brandt P."/>
            <person name="Bell M."/>
            <person name="Droege M."/>
            <person name="Fartmann B."/>
            <person name="Fischer H.-P."/>
            <person name="Ge Z."/>
            <person name="Hoerster A."/>
            <person name="Holland R."/>
            <person name="Klein K."/>
            <person name="Koenig J."/>
            <person name="Macko L."/>
            <person name="Mendz G.L."/>
            <person name="Nyakatura G."/>
            <person name="Schauer D.B."/>
            <person name="Shen Z."/>
            <person name="Weber J."/>
            <person name="Frosch M."/>
            <person name="Fox J.G."/>
        </authorList>
    </citation>
    <scope>NUCLEOTIDE SEQUENCE [LARGE SCALE GENOMIC DNA]</scope>
    <source>
        <strain>ATCC 51449 / 3B1</strain>
    </source>
</reference>
<evidence type="ECO:0000255" key="1">
    <source>
        <dbReference type="HAMAP-Rule" id="MF_00658"/>
    </source>
</evidence>
<evidence type="ECO:0000305" key="2"/>
<protein>
    <recommendedName>
        <fullName evidence="1">Ribosomal RNA large subunit methyltransferase H</fullName>
        <ecNumber evidence="1">2.1.1.177</ecNumber>
    </recommendedName>
    <alternativeName>
        <fullName evidence="1">23S rRNA (pseudouridine1915-N3)-methyltransferase</fullName>
    </alternativeName>
    <alternativeName>
        <fullName evidence="1">23S rRNA m3Psi1915 methyltransferase</fullName>
    </alternativeName>
    <alternativeName>
        <fullName evidence="1">rRNA (pseudouridine-N3-)-methyltransferase RlmH</fullName>
    </alternativeName>
</protein>
<dbReference type="EC" id="2.1.1.177" evidence="1"/>
<dbReference type="EMBL" id="AE017125">
    <property type="protein sequence ID" value="AAP77834.1"/>
    <property type="status" value="ALT_INIT"/>
    <property type="molecule type" value="Genomic_DNA"/>
</dbReference>
<dbReference type="RefSeq" id="WP_011116077.1">
    <property type="nucleotide sequence ID" value="NC_004917.1"/>
</dbReference>
<dbReference type="SMR" id="Q7VGT3"/>
<dbReference type="STRING" id="235279.HH_1237"/>
<dbReference type="KEGG" id="hhe:HH_1237"/>
<dbReference type="eggNOG" id="COG1576">
    <property type="taxonomic scope" value="Bacteria"/>
</dbReference>
<dbReference type="HOGENOM" id="CLU_100552_2_1_7"/>
<dbReference type="OrthoDB" id="9806643at2"/>
<dbReference type="Proteomes" id="UP000002495">
    <property type="component" value="Chromosome"/>
</dbReference>
<dbReference type="GO" id="GO:0005737">
    <property type="term" value="C:cytoplasm"/>
    <property type="evidence" value="ECO:0007669"/>
    <property type="project" value="UniProtKB-SubCell"/>
</dbReference>
<dbReference type="GO" id="GO:0070038">
    <property type="term" value="F:rRNA (pseudouridine-N3-)-methyltransferase activity"/>
    <property type="evidence" value="ECO:0007669"/>
    <property type="project" value="UniProtKB-UniRule"/>
</dbReference>
<dbReference type="CDD" id="cd18081">
    <property type="entry name" value="RlmH-like"/>
    <property type="match status" value="1"/>
</dbReference>
<dbReference type="Gene3D" id="3.40.1280.10">
    <property type="match status" value="1"/>
</dbReference>
<dbReference type="HAMAP" id="MF_00658">
    <property type="entry name" value="23SrRNA_methyltr_H"/>
    <property type="match status" value="1"/>
</dbReference>
<dbReference type="InterPro" id="IPR029028">
    <property type="entry name" value="Alpha/beta_knot_MTases"/>
</dbReference>
<dbReference type="InterPro" id="IPR003742">
    <property type="entry name" value="RlmH-like"/>
</dbReference>
<dbReference type="InterPro" id="IPR029026">
    <property type="entry name" value="tRNA_m1G_MTases_N"/>
</dbReference>
<dbReference type="NCBIfam" id="NF000987">
    <property type="entry name" value="PRK00103.2-1"/>
    <property type="match status" value="1"/>
</dbReference>
<dbReference type="PANTHER" id="PTHR33603">
    <property type="entry name" value="METHYLTRANSFERASE"/>
    <property type="match status" value="1"/>
</dbReference>
<dbReference type="PANTHER" id="PTHR33603:SF1">
    <property type="entry name" value="RIBOSOMAL RNA LARGE SUBUNIT METHYLTRANSFERASE H"/>
    <property type="match status" value="1"/>
</dbReference>
<dbReference type="Pfam" id="PF02590">
    <property type="entry name" value="SPOUT_MTase"/>
    <property type="match status" value="1"/>
</dbReference>
<dbReference type="PIRSF" id="PIRSF004505">
    <property type="entry name" value="MT_bac"/>
    <property type="match status" value="1"/>
</dbReference>
<dbReference type="SUPFAM" id="SSF75217">
    <property type="entry name" value="alpha/beta knot"/>
    <property type="match status" value="1"/>
</dbReference>
<gene>
    <name evidence="1" type="primary">rlmH</name>
    <name type="ordered locus">HH_1237</name>
</gene>
<feature type="chain" id="PRO_0000366605" description="Ribosomal RNA large subunit methyltransferase H">
    <location>
        <begin position="1"/>
        <end position="153"/>
    </location>
</feature>
<feature type="binding site" evidence="1">
    <location>
        <position position="75"/>
    </location>
    <ligand>
        <name>S-adenosyl-L-methionine</name>
        <dbReference type="ChEBI" id="CHEBI:59789"/>
    </ligand>
</feature>
<feature type="binding site" evidence="1">
    <location>
        <position position="103"/>
    </location>
    <ligand>
        <name>S-adenosyl-L-methionine</name>
        <dbReference type="ChEBI" id="CHEBI:59789"/>
    </ligand>
</feature>
<feature type="binding site" evidence="1">
    <location>
        <begin position="121"/>
        <end position="126"/>
    </location>
    <ligand>
        <name>S-adenosyl-L-methionine</name>
        <dbReference type="ChEBI" id="CHEBI:59789"/>
    </ligand>
</feature>
<proteinExistence type="inferred from homology"/>
<accession>Q7VGT3</accession>